<name>RLMH_LEUCK</name>
<proteinExistence type="inferred from homology"/>
<sequence>MNIKLITVGKLKEHYLKDGIAEYSKRIARFAKVELIEVPDEKTPEHASQAQNQQIMAKEGERIADKIGSRDYVIVLAIEGKQLPSETFSKKMSDITLSGYSTITFIIGGSLGLDERIKQRADMAISFGLLTLPHQLMRLVLIEQIYRAFMIQQGSPYHK</sequence>
<protein>
    <recommendedName>
        <fullName evidence="1">Ribosomal RNA large subunit methyltransferase H</fullName>
        <ecNumber evidence="1">2.1.1.177</ecNumber>
    </recommendedName>
    <alternativeName>
        <fullName evidence="1">23S rRNA (pseudouridine1915-N3)-methyltransferase</fullName>
    </alternativeName>
    <alternativeName>
        <fullName evidence="1">23S rRNA m3Psi1915 methyltransferase</fullName>
    </alternativeName>
    <alternativeName>
        <fullName evidence="1">rRNA (pseudouridine-N3-)-methyltransferase RlmH</fullName>
    </alternativeName>
</protein>
<dbReference type="EC" id="2.1.1.177" evidence="1"/>
<dbReference type="EMBL" id="DQ489736">
    <property type="protein sequence ID" value="ACA82023.1"/>
    <property type="molecule type" value="Genomic_DNA"/>
</dbReference>
<dbReference type="RefSeq" id="WP_004899536.1">
    <property type="nucleotide sequence ID" value="NC_010471.1"/>
</dbReference>
<dbReference type="SMR" id="B1MWX1"/>
<dbReference type="STRING" id="349519.LCK_00190"/>
<dbReference type="GeneID" id="61102898"/>
<dbReference type="KEGG" id="lci:LCK_00190"/>
<dbReference type="eggNOG" id="COG1576">
    <property type="taxonomic scope" value="Bacteria"/>
</dbReference>
<dbReference type="HOGENOM" id="CLU_100552_0_0_9"/>
<dbReference type="OrthoDB" id="9806643at2"/>
<dbReference type="Proteomes" id="UP000002166">
    <property type="component" value="Chromosome"/>
</dbReference>
<dbReference type="GO" id="GO:0005737">
    <property type="term" value="C:cytoplasm"/>
    <property type="evidence" value="ECO:0007669"/>
    <property type="project" value="UniProtKB-SubCell"/>
</dbReference>
<dbReference type="GO" id="GO:0070038">
    <property type="term" value="F:rRNA (pseudouridine-N3-)-methyltransferase activity"/>
    <property type="evidence" value="ECO:0007669"/>
    <property type="project" value="UniProtKB-UniRule"/>
</dbReference>
<dbReference type="CDD" id="cd18081">
    <property type="entry name" value="RlmH-like"/>
    <property type="match status" value="1"/>
</dbReference>
<dbReference type="Gene3D" id="3.40.1280.10">
    <property type="match status" value="1"/>
</dbReference>
<dbReference type="HAMAP" id="MF_00658">
    <property type="entry name" value="23SrRNA_methyltr_H"/>
    <property type="match status" value="1"/>
</dbReference>
<dbReference type="InterPro" id="IPR029028">
    <property type="entry name" value="Alpha/beta_knot_MTases"/>
</dbReference>
<dbReference type="InterPro" id="IPR003742">
    <property type="entry name" value="RlmH-like"/>
</dbReference>
<dbReference type="InterPro" id="IPR029026">
    <property type="entry name" value="tRNA_m1G_MTases_N"/>
</dbReference>
<dbReference type="NCBIfam" id="NF000985">
    <property type="entry name" value="PRK00103.1-3"/>
    <property type="match status" value="1"/>
</dbReference>
<dbReference type="NCBIfam" id="TIGR00246">
    <property type="entry name" value="tRNA_RlmH_YbeA"/>
    <property type="match status" value="1"/>
</dbReference>
<dbReference type="PANTHER" id="PTHR33603">
    <property type="entry name" value="METHYLTRANSFERASE"/>
    <property type="match status" value="1"/>
</dbReference>
<dbReference type="PANTHER" id="PTHR33603:SF1">
    <property type="entry name" value="RIBOSOMAL RNA LARGE SUBUNIT METHYLTRANSFERASE H"/>
    <property type="match status" value="1"/>
</dbReference>
<dbReference type="Pfam" id="PF02590">
    <property type="entry name" value="SPOUT_MTase"/>
    <property type="match status" value="1"/>
</dbReference>
<dbReference type="PIRSF" id="PIRSF004505">
    <property type="entry name" value="MT_bac"/>
    <property type="match status" value="1"/>
</dbReference>
<dbReference type="SUPFAM" id="SSF75217">
    <property type="entry name" value="alpha/beta knot"/>
    <property type="match status" value="1"/>
</dbReference>
<organism>
    <name type="scientific">Leuconostoc citreum (strain KM20)</name>
    <dbReference type="NCBI Taxonomy" id="349519"/>
    <lineage>
        <taxon>Bacteria</taxon>
        <taxon>Bacillati</taxon>
        <taxon>Bacillota</taxon>
        <taxon>Bacilli</taxon>
        <taxon>Lactobacillales</taxon>
        <taxon>Lactobacillaceae</taxon>
        <taxon>Leuconostoc</taxon>
    </lineage>
</organism>
<gene>
    <name evidence="1" type="primary">rlmH</name>
    <name type="ordered locus">LCK_00190</name>
</gene>
<accession>B1MWX1</accession>
<comment type="function">
    <text evidence="1">Specifically methylates the pseudouridine at position 1915 (m3Psi1915) in 23S rRNA.</text>
</comment>
<comment type="catalytic activity">
    <reaction evidence="1">
        <text>pseudouridine(1915) in 23S rRNA + S-adenosyl-L-methionine = N(3)-methylpseudouridine(1915) in 23S rRNA + S-adenosyl-L-homocysteine + H(+)</text>
        <dbReference type="Rhea" id="RHEA:42752"/>
        <dbReference type="Rhea" id="RHEA-COMP:10221"/>
        <dbReference type="Rhea" id="RHEA-COMP:10222"/>
        <dbReference type="ChEBI" id="CHEBI:15378"/>
        <dbReference type="ChEBI" id="CHEBI:57856"/>
        <dbReference type="ChEBI" id="CHEBI:59789"/>
        <dbReference type="ChEBI" id="CHEBI:65314"/>
        <dbReference type="ChEBI" id="CHEBI:74486"/>
        <dbReference type="EC" id="2.1.1.177"/>
    </reaction>
</comment>
<comment type="subunit">
    <text evidence="1">Homodimer.</text>
</comment>
<comment type="subcellular location">
    <subcellularLocation>
        <location evidence="1">Cytoplasm</location>
    </subcellularLocation>
</comment>
<comment type="similarity">
    <text evidence="1">Belongs to the RNA methyltransferase RlmH family.</text>
</comment>
<evidence type="ECO:0000255" key="1">
    <source>
        <dbReference type="HAMAP-Rule" id="MF_00658"/>
    </source>
</evidence>
<feature type="chain" id="PRO_0000366617" description="Ribosomal RNA large subunit methyltransferase H">
    <location>
        <begin position="1"/>
        <end position="159"/>
    </location>
</feature>
<feature type="binding site" evidence="1">
    <location>
        <position position="76"/>
    </location>
    <ligand>
        <name>S-adenosyl-L-methionine</name>
        <dbReference type="ChEBI" id="CHEBI:59789"/>
    </ligand>
</feature>
<feature type="binding site" evidence="1">
    <location>
        <position position="108"/>
    </location>
    <ligand>
        <name>S-adenosyl-L-methionine</name>
        <dbReference type="ChEBI" id="CHEBI:59789"/>
    </ligand>
</feature>
<feature type="binding site" evidence="1">
    <location>
        <begin position="127"/>
        <end position="132"/>
    </location>
    <ligand>
        <name>S-adenosyl-L-methionine</name>
        <dbReference type="ChEBI" id="CHEBI:59789"/>
    </ligand>
</feature>
<reference key="1">
    <citation type="journal article" date="2008" name="J. Bacteriol.">
        <title>Complete genome sequence of Leuconostoc citreum KM20.</title>
        <authorList>
            <person name="Kim J.F."/>
            <person name="Jeong H."/>
            <person name="Lee J.-S."/>
            <person name="Choi S.-H."/>
            <person name="Ha M."/>
            <person name="Hur C.-G."/>
            <person name="Kim J.-S."/>
            <person name="Lee S."/>
            <person name="Park H.-S."/>
            <person name="Park Y.-H."/>
            <person name="Oh T.K."/>
        </authorList>
    </citation>
    <scope>NUCLEOTIDE SEQUENCE [LARGE SCALE GENOMIC DNA]</scope>
    <source>
        <strain>KM20</strain>
    </source>
</reference>
<keyword id="KW-0963">Cytoplasm</keyword>
<keyword id="KW-0489">Methyltransferase</keyword>
<keyword id="KW-1185">Reference proteome</keyword>
<keyword id="KW-0698">rRNA processing</keyword>
<keyword id="KW-0949">S-adenosyl-L-methionine</keyword>
<keyword id="KW-0808">Transferase</keyword>